<accession>C3PNF6</accession>
<name>SSRP_RICAE</name>
<gene>
    <name evidence="1" type="primary">smpB</name>
    <name type="ordered locus">RAF_ORF0555</name>
</gene>
<protein>
    <recommendedName>
        <fullName evidence="1">SsrA-binding protein</fullName>
    </recommendedName>
    <alternativeName>
        <fullName evidence="1">Small protein B</fullName>
    </alternativeName>
</protein>
<reference key="1">
    <citation type="journal article" date="2009" name="BMC Genomics">
        <title>Analysis of the Rickettsia africae genome reveals that virulence acquisition in Rickettsia species may be explained by genome reduction.</title>
        <authorList>
            <person name="Fournier P.-E."/>
            <person name="El Karkouri K."/>
            <person name="Leroy Q."/>
            <person name="Robert C."/>
            <person name="Giumelli B."/>
            <person name="Renesto P."/>
            <person name="Socolovschi C."/>
            <person name="Parola P."/>
            <person name="Audic S."/>
            <person name="Raoult D."/>
        </authorList>
    </citation>
    <scope>NUCLEOTIDE SEQUENCE [LARGE SCALE GENOMIC DNA]</scope>
    <source>
        <strain>ESF-5</strain>
    </source>
</reference>
<sequence>MTEYKKVIAQNKKALFNYFIAERLEAGIVLKGSEVRSLRQGKASIEESHAADTGHEVFLYNCHIAEYEKANRFNHATRRPRKLLLHTKEIKKIIGRIRIKGYTLVALSMYFNKKNKVKVELGIAKGKKLHDKRESIKEKDWKRDQSRLIRQK</sequence>
<organism>
    <name type="scientific">Rickettsia africae (strain ESF-5)</name>
    <dbReference type="NCBI Taxonomy" id="347255"/>
    <lineage>
        <taxon>Bacteria</taxon>
        <taxon>Pseudomonadati</taxon>
        <taxon>Pseudomonadota</taxon>
        <taxon>Alphaproteobacteria</taxon>
        <taxon>Rickettsiales</taxon>
        <taxon>Rickettsiaceae</taxon>
        <taxon>Rickettsieae</taxon>
        <taxon>Rickettsia</taxon>
        <taxon>spotted fever group</taxon>
    </lineage>
</organism>
<proteinExistence type="inferred from homology"/>
<feature type="chain" id="PRO_1000201940" description="SsrA-binding protein">
    <location>
        <begin position="1"/>
        <end position="152"/>
    </location>
</feature>
<evidence type="ECO:0000255" key="1">
    <source>
        <dbReference type="HAMAP-Rule" id="MF_00023"/>
    </source>
</evidence>
<keyword id="KW-0963">Cytoplasm</keyword>
<keyword id="KW-0694">RNA-binding</keyword>
<dbReference type="EMBL" id="CP001612">
    <property type="protein sequence ID" value="ACP53466.1"/>
    <property type="molecule type" value="Genomic_DNA"/>
</dbReference>
<dbReference type="RefSeq" id="WP_012719684.1">
    <property type="nucleotide sequence ID" value="NC_012633.1"/>
</dbReference>
<dbReference type="SMR" id="C3PNF6"/>
<dbReference type="KEGG" id="raf:RAF_ORF0555"/>
<dbReference type="HOGENOM" id="CLU_108953_0_1_5"/>
<dbReference type="Proteomes" id="UP000002305">
    <property type="component" value="Chromosome"/>
</dbReference>
<dbReference type="GO" id="GO:0005829">
    <property type="term" value="C:cytosol"/>
    <property type="evidence" value="ECO:0007669"/>
    <property type="project" value="TreeGrafter"/>
</dbReference>
<dbReference type="GO" id="GO:0003723">
    <property type="term" value="F:RNA binding"/>
    <property type="evidence" value="ECO:0007669"/>
    <property type="project" value="UniProtKB-UniRule"/>
</dbReference>
<dbReference type="GO" id="GO:0070929">
    <property type="term" value="P:trans-translation"/>
    <property type="evidence" value="ECO:0007669"/>
    <property type="project" value="UniProtKB-UniRule"/>
</dbReference>
<dbReference type="CDD" id="cd09294">
    <property type="entry name" value="SmpB"/>
    <property type="match status" value="1"/>
</dbReference>
<dbReference type="Gene3D" id="2.40.280.10">
    <property type="match status" value="1"/>
</dbReference>
<dbReference type="HAMAP" id="MF_00023">
    <property type="entry name" value="SmpB"/>
    <property type="match status" value="1"/>
</dbReference>
<dbReference type="InterPro" id="IPR023620">
    <property type="entry name" value="SmpB"/>
</dbReference>
<dbReference type="InterPro" id="IPR000037">
    <property type="entry name" value="SsrA-bd_prot"/>
</dbReference>
<dbReference type="NCBIfam" id="NF003843">
    <property type="entry name" value="PRK05422.1"/>
    <property type="match status" value="1"/>
</dbReference>
<dbReference type="NCBIfam" id="TIGR00086">
    <property type="entry name" value="smpB"/>
    <property type="match status" value="1"/>
</dbReference>
<dbReference type="PANTHER" id="PTHR30308:SF2">
    <property type="entry name" value="SSRA-BINDING PROTEIN"/>
    <property type="match status" value="1"/>
</dbReference>
<dbReference type="PANTHER" id="PTHR30308">
    <property type="entry name" value="TMRNA-BINDING COMPONENT OF TRANS-TRANSLATION TAGGING COMPLEX"/>
    <property type="match status" value="1"/>
</dbReference>
<dbReference type="Pfam" id="PF01668">
    <property type="entry name" value="SmpB"/>
    <property type="match status" value="1"/>
</dbReference>
<dbReference type="SUPFAM" id="SSF74982">
    <property type="entry name" value="Small protein B (SmpB)"/>
    <property type="match status" value="1"/>
</dbReference>
<comment type="function">
    <text evidence="1">Required for rescue of stalled ribosomes mediated by trans-translation. Binds to transfer-messenger RNA (tmRNA), required for stable association of tmRNA with ribosomes. tmRNA and SmpB together mimic tRNA shape, replacing the anticodon stem-loop with SmpB. tmRNA is encoded by the ssrA gene; the 2 termini fold to resemble tRNA(Ala) and it encodes a 'tag peptide', a short internal open reading frame. During trans-translation Ala-aminoacylated tmRNA acts like a tRNA, entering the A-site of stalled ribosomes, displacing the stalled mRNA. The ribosome then switches to translate the ORF on the tmRNA; the nascent peptide is terminated with the 'tag peptide' encoded by the tmRNA and targeted for degradation. The ribosome is freed to recommence translation, which seems to be the essential function of trans-translation.</text>
</comment>
<comment type="subcellular location">
    <subcellularLocation>
        <location evidence="1">Cytoplasm</location>
    </subcellularLocation>
    <text evidence="1">The tmRNA-SmpB complex associates with stalled 70S ribosomes.</text>
</comment>
<comment type="similarity">
    <text evidence="1">Belongs to the SmpB family.</text>
</comment>